<keyword id="KW-0217">Developmental protein</keyword>
<keyword id="KW-0238">DNA-binding</keyword>
<keyword id="KW-0371">Homeobox</keyword>
<keyword id="KW-0539">Nucleus</keyword>
<keyword id="KW-1185">Reference proteome</keyword>
<keyword id="KW-0804">Transcription</keyword>
<keyword id="KW-0805">Transcription regulation</keyword>
<sequence length="443" mass="46430">MQKATYYDSSAIYGGYPYQAANGFAYNASQQPYAPSAALGTDGVEYHRPACSLQSPASAGGHPKTHELSEACLRTLSGPPSQPPGLGEPPLPPPPPQAAPPAPQPPQPPPQPPAPTPAAPPPPSSVSPPQSANSNPTPASTAKSPLLNSPTVGKQIFPWMKESRQNTKQKTSGSSSGESCAGDKSPPGQASSKRARTAYTSAQLVELEKEFHFNRYLCRPRRVEMANLLNLTERQIKIWFQNRRMKYKKDQKGKGMLTSSGGQSPSRSPVPPGAGGYLNSMHSLVNSVPYEPQSPPPFSKPPQGAYGLPPASYPAPLPSCAPPPPPQKRYTAAGSGAGGTPDYDPHAHGLQGNGSYGTPHLQGSPVFVGGSYVEPMSNSGPLFGLTHLPHTTSAAMDYGGTGPLGSGHHHGPGPGEPHPTYTDLTAHHPSQGRIQEAPKLTHL</sequence>
<gene>
    <name type="primary">Hoxa3</name>
    <name type="synonym">Hox-1.5</name>
    <name type="synonym">Hoxa-3</name>
</gene>
<proteinExistence type="evidence at protein level"/>
<feature type="chain" id="PRO_0000200044" description="Homeobox protein Hox-A3">
    <location>
        <begin position="1"/>
        <end position="443"/>
    </location>
</feature>
<feature type="DNA-binding region" description="Homeobox" evidence="1">
    <location>
        <begin position="192"/>
        <end position="251"/>
    </location>
</feature>
<feature type="region of interest" description="Disordered" evidence="2">
    <location>
        <begin position="74"/>
        <end position="151"/>
    </location>
</feature>
<feature type="region of interest" description="Disordered" evidence="2">
    <location>
        <begin position="163"/>
        <end position="197"/>
    </location>
</feature>
<feature type="region of interest" description="Disordered" evidence="2">
    <location>
        <begin position="248"/>
        <end position="354"/>
    </location>
</feature>
<feature type="region of interest" description="Disordered" evidence="2">
    <location>
        <begin position="401"/>
        <end position="443"/>
    </location>
</feature>
<feature type="short sequence motif" description="Antp-type hexapeptide">
    <location>
        <begin position="156"/>
        <end position="161"/>
    </location>
</feature>
<feature type="compositionally biased region" description="Pro residues" evidence="2">
    <location>
        <begin position="80"/>
        <end position="126"/>
    </location>
</feature>
<feature type="compositionally biased region" description="Polar residues" evidence="2">
    <location>
        <begin position="132"/>
        <end position="151"/>
    </location>
</feature>
<feature type="compositionally biased region" description="Polar residues" evidence="2">
    <location>
        <begin position="166"/>
        <end position="178"/>
    </location>
</feature>
<feature type="compositionally biased region" description="Polar residues" evidence="2">
    <location>
        <begin position="188"/>
        <end position="197"/>
    </location>
</feature>
<feature type="compositionally biased region" description="Polar residues" evidence="2">
    <location>
        <begin position="257"/>
        <end position="267"/>
    </location>
</feature>
<feature type="compositionally biased region" description="Low complexity" evidence="2">
    <location>
        <begin position="301"/>
        <end position="310"/>
    </location>
</feature>
<feature type="compositionally biased region" description="Pro residues" evidence="2">
    <location>
        <begin position="311"/>
        <end position="327"/>
    </location>
</feature>
<feature type="sequence conflict" description="In Ref. 4 and 5." evidence="4" ref="4 5">
    <original>S</original>
    <variation>G</variation>
    <location>
        <position position="185"/>
    </location>
</feature>
<feature type="sequence conflict" description="In Ref. 4 and 5." evidence="4" ref="4 5">
    <original>A</original>
    <variation>G</variation>
    <location>
        <position position="195"/>
    </location>
</feature>
<feature type="sequence conflict" description="In Ref. 4 and 5." evidence="4" ref="4 5">
    <original>SA</original>
    <variation>RP</variation>
    <location>
        <begin position="201"/>
        <end position="202"/>
    </location>
</feature>
<feature type="sequence conflict" description="In Ref. 4 and 5." evidence="4" ref="4 5">
    <original>C</original>
    <variation>M</variation>
    <location>
        <position position="218"/>
    </location>
</feature>
<name>HXA3_MOUSE</name>
<evidence type="ECO:0000255" key="1">
    <source>
        <dbReference type="PROSITE-ProRule" id="PRU00108"/>
    </source>
</evidence>
<evidence type="ECO:0000256" key="2">
    <source>
        <dbReference type="SAM" id="MobiDB-lite"/>
    </source>
</evidence>
<evidence type="ECO:0000269" key="3">
    <source>
    </source>
</evidence>
<evidence type="ECO:0000305" key="4"/>
<reference key="1">
    <citation type="submission" date="1997-03" db="EMBL/GenBank/DDBJ databases">
        <authorList>
            <person name="Hofmann M."/>
            <person name="Boehm T."/>
        </authorList>
    </citation>
    <scope>NUCLEOTIDE SEQUENCE [MRNA]</scope>
    <source>
        <strain>BALB/cJ</strain>
    </source>
</reference>
<reference key="2">
    <citation type="journal article" date="2004" name="Genome Res.">
        <title>The status, quality, and expansion of the NIH full-length cDNA project: the Mammalian Gene Collection (MGC).</title>
        <authorList>
            <consortium name="The MGC Project Team"/>
        </authorList>
    </citation>
    <scope>NUCLEOTIDE SEQUENCE [LARGE SCALE MRNA]</scope>
    <source>
        <strain>FVB/N</strain>
        <tissue>Colon</tissue>
    </source>
</reference>
<reference key="3">
    <citation type="journal article" date="1996" name="Proc. Natl. Acad. Sci. U.S.A.">
        <title>Sequence and expression of the murine Hoxd-3 homeobox gene.</title>
        <authorList>
            <person name="Tan D.-P."/>
            <person name="Shao X."/>
            <person name="Pu L."/>
            <person name="Guo V."/>
            <person name="Nirenberg M."/>
        </authorList>
    </citation>
    <scope>NUCLEOTIDE SEQUENCE [MRNA] OF 54-280</scope>
    <source>
        <strain>ICR X Swiss Webster</strain>
    </source>
</reference>
<reference key="4">
    <citation type="journal article" date="1985" name="Trends Genet.">
        <title>Structural and functional aspects of the mammalian homeo-box sequences.</title>
        <authorList>
            <person name="Ruddle F.H."/>
            <person name="Hart C.P."/>
            <person name="McGinnis W."/>
        </authorList>
    </citation>
    <scope>NUCLEOTIDE SEQUENCE OF 185-258</scope>
</reference>
<reference key="5">
    <citation type="journal article" date="1984" name="Cell">
        <title>Molecular cloning and chromosome mapping of a mouse DNA sequence homologous to homeotic genes of Drosophila.</title>
        <authorList>
            <person name="McGinnis W."/>
            <person name="Hart C.P."/>
            <person name="Gehring W.J."/>
            <person name="Ruddle F.H."/>
        </authorList>
    </citation>
    <scope>NUCLEOTIDE SEQUENCE [GENOMIC DNA] OF 185-258</scope>
</reference>
<reference key="6">
    <citation type="journal article" date="1986" name="Proc. Natl. Acad. Sci. U.S.A.">
        <title>The homeo domain of a murine protein binds 5' to its own homeo box.</title>
        <authorList>
            <person name="Fainsod A."/>
            <person name="Bogarad L.D."/>
            <person name="Ruusala T."/>
            <person name="Lubin M."/>
            <person name="Crothers D.M."/>
            <person name="Ruddle F.H."/>
        </authorList>
    </citation>
    <scope>DNA-BINDING</scope>
</reference>
<reference key="7">
    <citation type="journal article" date="1987" name="Dev. Biol.">
        <title>Expression of the murine homeo box gene Hox 1.5 during embryogenesis.</title>
        <authorList>
            <person name="Fainsod A."/>
            <person name="Awgulewitsch A."/>
            <person name="Ruddle F.H."/>
        </authorList>
    </citation>
    <scope>DEVELOPMENTAL STAGE</scope>
</reference>
<protein>
    <recommendedName>
        <fullName>Homeobox protein Hox-A3</fullName>
    </recommendedName>
    <alternativeName>
        <fullName>Homeobox protein Hox-1.5</fullName>
    </alternativeName>
    <alternativeName>
        <fullName>Homeobox protein MO-10</fullName>
    </alternativeName>
</protein>
<dbReference type="EMBL" id="Y11717">
    <property type="protein sequence ID" value="CAA72404.1"/>
    <property type="molecule type" value="mRNA"/>
</dbReference>
<dbReference type="EMBL" id="BC096612">
    <property type="protein sequence ID" value="AAH96612.1"/>
    <property type="molecule type" value="mRNA"/>
</dbReference>
<dbReference type="EMBL" id="U56399">
    <property type="protein sequence ID" value="AAC52778.1"/>
    <property type="molecule type" value="mRNA"/>
</dbReference>
<dbReference type="EMBL" id="K02591">
    <property type="protein sequence ID" value="AAA37822.1"/>
    <property type="molecule type" value="Genomic_DNA"/>
</dbReference>
<dbReference type="CCDS" id="CCDS20140.1"/>
<dbReference type="PIR" id="I49746">
    <property type="entry name" value="I49746"/>
</dbReference>
<dbReference type="RefSeq" id="NP_034582.1">
    <property type="nucleotide sequence ID" value="NM_010452.4"/>
</dbReference>
<dbReference type="RefSeq" id="XP_011239527.1">
    <property type="nucleotide sequence ID" value="XM_011241225.4"/>
</dbReference>
<dbReference type="RefSeq" id="XP_017176891.1">
    <property type="nucleotide sequence ID" value="XM_017321402.2"/>
</dbReference>
<dbReference type="RefSeq" id="XP_017176892.1">
    <property type="nucleotide sequence ID" value="XM_017321403.2"/>
</dbReference>
<dbReference type="RefSeq" id="XP_017176893.1">
    <property type="nucleotide sequence ID" value="XM_017321404.3"/>
</dbReference>
<dbReference type="SMR" id="P02831"/>
<dbReference type="BioGRID" id="200368">
    <property type="interactions" value="2"/>
</dbReference>
<dbReference type="FunCoup" id="P02831">
    <property type="interactions" value="2062"/>
</dbReference>
<dbReference type="STRING" id="10090.ENSMUSP00000110077"/>
<dbReference type="GlyGen" id="P02831">
    <property type="glycosylation" value="4 sites, 1 N-linked glycan (1 site)"/>
</dbReference>
<dbReference type="iPTMnet" id="P02831"/>
<dbReference type="PhosphoSitePlus" id="P02831"/>
<dbReference type="PaxDb" id="10090-ENSMUSP00000110077"/>
<dbReference type="Pumba" id="P02831"/>
<dbReference type="Antibodypedia" id="12366">
    <property type="antibodies" value="205 antibodies from 23 providers"/>
</dbReference>
<dbReference type="DNASU" id="15400"/>
<dbReference type="Ensembl" id="ENSMUST00000114434.9">
    <property type="protein sequence ID" value="ENSMUSP00000110077.3"/>
    <property type="gene ID" value="ENSMUSG00000079560.14"/>
</dbReference>
<dbReference type="GeneID" id="15400"/>
<dbReference type="KEGG" id="mmu:15400"/>
<dbReference type="UCSC" id="uc009bya.2">
    <property type="organism name" value="mouse"/>
</dbReference>
<dbReference type="AGR" id="MGI:96175"/>
<dbReference type="CTD" id="3200"/>
<dbReference type="MGI" id="MGI:96175">
    <property type="gene designation" value="Hoxa3"/>
</dbReference>
<dbReference type="VEuPathDB" id="HostDB:ENSMUSG00000079560"/>
<dbReference type="eggNOG" id="KOG0489">
    <property type="taxonomic scope" value="Eukaryota"/>
</dbReference>
<dbReference type="GeneTree" id="ENSGT00940000159522"/>
<dbReference type="HOGENOM" id="CLU_051508_1_0_1"/>
<dbReference type="InParanoid" id="P02831"/>
<dbReference type="OMA" id="PDYDPHP"/>
<dbReference type="OrthoDB" id="6159439at2759"/>
<dbReference type="PhylomeDB" id="P02831"/>
<dbReference type="TreeFam" id="TF315938"/>
<dbReference type="BioGRID-ORCS" id="15400">
    <property type="hits" value="6 hits in 78 CRISPR screens"/>
</dbReference>
<dbReference type="ChiTaRS" id="Hoxa3">
    <property type="organism name" value="mouse"/>
</dbReference>
<dbReference type="PRO" id="PR:P02831"/>
<dbReference type="Proteomes" id="UP000000589">
    <property type="component" value="Chromosome 6"/>
</dbReference>
<dbReference type="RNAct" id="P02831">
    <property type="molecule type" value="protein"/>
</dbReference>
<dbReference type="Bgee" id="ENSMUSG00000079560">
    <property type="expression patterns" value="Expressed in ascending aorta and 155 other cell types or tissues"/>
</dbReference>
<dbReference type="ExpressionAtlas" id="P02831">
    <property type="expression patterns" value="baseline and differential"/>
</dbReference>
<dbReference type="GO" id="GO:0005654">
    <property type="term" value="C:nucleoplasm"/>
    <property type="evidence" value="ECO:0000304"/>
    <property type="project" value="Reactome"/>
</dbReference>
<dbReference type="GO" id="GO:0003677">
    <property type="term" value="F:DNA binding"/>
    <property type="evidence" value="ECO:0007669"/>
    <property type="project" value="UniProtKB-KW"/>
</dbReference>
<dbReference type="GO" id="GO:0003700">
    <property type="term" value="F:DNA-binding transcription factor activity"/>
    <property type="evidence" value="ECO:0000314"/>
    <property type="project" value="MGI"/>
</dbReference>
<dbReference type="GO" id="GO:0000981">
    <property type="term" value="F:DNA-binding transcription factor activity, RNA polymerase II-specific"/>
    <property type="evidence" value="ECO:0007669"/>
    <property type="project" value="InterPro"/>
</dbReference>
<dbReference type="GO" id="GO:0071837">
    <property type="term" value="F:HMG box domain binding"/>
    <property type="evidence" value="ECO:0000353"/>
    <property type="project" value="UniProtKB"/>
</dbReference>
<dbReference type="GO" id="GO:0001525">
    <property type="term" value="P:angiogenesis"/>
    <property type="evidence" value="ECO:0007669"/>
    <property type="project" value="Ensembl"/>
</dbReference>
<dbReference type="GO" id="GO:0048645">
    <property type="term" value="P:animal organ formation"/>
    <property type="evidence" value="ECO:0000315"/>
    <property type="project" value="MGI"/>
</dbReference>
<dbReference type="GO" id="GO:0009887">
    <property type="term" value="P:animal organ morphogenesis"/>
    <property type="evidence" value="ECO:0000315"/>
    <property type="project" value="MGI"/>
</dbReference>
<dbReference type="GO" id="GO:0009952">
    <property type="term" value="P:anterior/posterior pattern specification"/>
    <property type="evidence" value="ECO:0000316"/>
    <property type="project" value="MGI"/>
</dbReference>
<dbReference type="GO" id="GO:0001974">
    <property type="term" value="P:blood vessel remodeling"/>
    <property type="evidence" value="ECO:0000315"/>
    <property type="project" value="MGI"/>
</dbReference>
<dbReference type="GO" id="GO:0051216">
    <property type="term" value="P:cartilage development"/>
    <property type="evidence" value="ECO:0000316"/>
    <property type="project" value="MGI"/>
</dbReference>
<dbReference type="GO" id="GO:0008283">
    <property type="term" value="P:cell population proliferation"/>
    <property type="evidence" value="ECO:0000315"/>
    <property type="project" value="MGI"/>
</dbReference>
<dbReference type="GO" id="GO:0048706">
    <property type="term" value="P:embryonic skeletal system development"/>
    <property type="evidence" value="ECO:0000316"/>
    <property type="project" value="MGI"/>
</dbReference>
<dbReference type="GO" id="GO:0048704">
    <property type="term" value="P:embryonic skeletal system morphogenesis"/>
    <property type="evidence" value="ECO:0000316"/>
    <property type="project" value="MGI"/>
</dbReference>
<dbReference type="GO" id="GO:0010467">
    <property type="term" value="P:gene expression"/>
    <property type="evidence" value="ECO:0000315"/>
    <property type="project" value="MGI"/>
</dbReference>
<dbReference type="GO" id="GO:0021615">
    <property type="term" value="P:glossopharyngeal nerve morphogenesis"/>
    <property type="evidence" value="ECO:0000315"/>
    <property type="project" value="MGI"/>
</dbReference>
<dbReference type="GO" id="GO:0060017">
    <property type="term" value="P:parathyroid gland development"/>
    <property type="evidence" value="ECO:0000316"/>
    <property type="project" value="MGI"/>
</dbReference>
<dbReference type="GO" id="GO:2000648">
    <property type="term" value="P:positive regulation of stem cell proliferation"/>
    <property type="evidence" value="ECO:0000315"/>
    <property type="project" value="MGI"/>
</dbReference>
<dbReference type="GO" id="GO:0010159">
    <property type="term" value="P:specification of animal organ position"/>
    <property type="evidence" value="ECO:0000316"/>
    <property type="project" value="MGI"/>
</dbReference>
<dbReference type="GO" id="GO:0072089">
    <property type="term" value="P:stem cell proliferation"/>
    <property type="evidence" value="ECO:0000315"/>
    <property type="project" value="MGI"/>
</dbReference>
<dbReference type="GO" id="GO:0048538">
    <property type="term" value="P:thymus development"/>
    <property type="evidence" value="ECO:0000315"/>
    <property type="project" value="MGI"/>
</dbReference>
<dbReference type="GO" id="GO:0030878">
    <property type="term" value="P:thyroid gland development"/>
    <property type="evidence" value="ECO:0000315"/>
    <property type="project" value="MGI"/>
</dbReference>
<dbReference type="CDD" id="cd00086">
    <property type="entry name" value="homeodomain"/>
    <property type="match status" value="1"/>
</dbReference>
<dbReference type="FunFam" id="1.10.10.60:FF:000094">
    <property type="entry name" value="Homeobox protein Hox-A3"/>
    <property type="match status" value="1"/>
</dbReference>
<dbReference type="Gene3D" id="1.10.10.60">
    <property type="entry name" value="Homeodomain-like"/>
    <property type="match status" value="1"/>
</dbReference>
<dbReference type="InterPro" id="IPR025281">
    <property type="entry name" value="DUF4074"/>
</dbReference>
<dbReference type="InterPro" id="IPR001356">
    <property type="entry name" value="HD"/>
</dbReference>
<dbReference type="InterPro" id="IPR020479">
    <property type="entry name" value="HD_metazoa"/>
</dbReference>
<dbReference type="InterPro" id="IPR001827">
    <property type="entry name" value="Homeobox_Antennapedia_CS"/>
</dbReference>
<dbReference type="InterPro" id="IPR017970">
    <property type="entry name" value="Homeobox_CS"/>
</dbReference>
<dbReference type="InterPro" id="IPR009057">
    <property type="entry name" value="Homeodomain-like_sf"/>
</dbReference>
<dbReference type="PANTHER" id="PTHR45664:SF13">
    <property type="entry name" value="HOMEOBOX PROTEIN HOX-A3"/>
    <property type="match status" value="1"/>
</dbReference>
<dbReference type="PANTHER" id="PTHR45664">
    <property type="entry name" value="PROTEIN ZERKNUELLT 1-RELATED"/>
    <property type="match status" value="1"/>
</dbReference>
<dbReference type="Pfam" id="PF13293">
    <property type="entry name" value="DUF4074"/>
    <property type="match status" value="1"/>
</dbReference>
<dbReference type="Pfam" id="PF00046">
    <property type="entry name" value="Homeodomain"/>
    <property type="match status" value="1"/>
</dbReference>
<dbReference type="PRINTS" id="PR00024">
    <property type="entry name" value="HOMEOBOX"/>
</dbReference>
<dbReference type="PRINTS" id="PR01217">
    <property type="entry name" value="PRICHEXTENSN"/>
</dbReference>
<dbReference type="SMART" id="SM00389">
    <property type="entry name" value="HOX"/>
    <property type="match status" value="1"/>
</dbReference>
<dbReference type="SUPFAM" id="SSF46689">
    <property type="entry name" value="Homeodomain-like"/>
    <property type="match status" value="1"/>
</dbReference>
<dbReference type="PROSITE" id="PS00032">
    <property type="entry name" value="ANTENNAPEDIA"/>
    <property type="match status" value="1"/>
</dbReference>
<dbReference type="PROSITE" id="PS00027">
    <property type="entry name" value="HOMEOBOX_1"/>
    <property type="match status" value="1"/>
</dbReference>
<dbReference type="PROSITE" id="PS50071">
    <property type="entry name" value="HOMEOBOX_2"/>
    <property type="match status" value="1"/>
</dbReference>
<comment type="function">
    <text>Sequence-specific transcription factor which is part of a developmental regulatory system that provides cells with specific positional identities on the anterior-posterior axis. Binds 5' to its own homeobox.</text>
</comment>
<comment type="subcellular location">
    <subcellularLocation>
        <location>Nucleus</location>
    </subcellularLocation>
</comment>
<comment type="developmental stage">
    <text evidence="3">Expressed in a spatially restricted manner in embryos 8.5 dpc, expression is limited to the CNS with an anterior boundary in the hindbrain and extending posteriorly through caudal regions of the spinal cord. The same spatial expression is seen in embryos 9.5 to 12.5 dpc.</text>
</comment>
<comment type="similarity">
    <text evidence="4">Belongs to the Antp homeobox family.</text>
</comment>
<organism>
    <name type="scientific">Mus musculus</name>
    <name type="common">Mouse</name>
    <dbReference type="NCBI Taxonomy" id="10090"/>
    <lineage>
        <taxon>Eukaryota</taxon>
        <taxon>Metazoa</taxon>
        <taxon>Chordata</taxon>
        <taxon>Craniata</taxon>
        <taxon>Vertebrata</taxon>
        <taxon>Euteleostomi</taxon>
        <taxon>Mammalia</taxon>
        <taxon>Eutheria</taxon>
        <taxon>Euarchontoglires</taxon>
        <taxon>Glires</taxon>
        <taxon>Rodentia</taxon>
        <taxon>Myomorpha</taxon>
        <taxon>Muroidea</taxon>
        <taxon>Muridae</taxon>
        <taxon>Murinae</taxon>
        <taxon>Mus</taxon>
        <taxon>Mus</taxon>
    </lineage>
</organism>
<accession>P02831</accession>
<accession>Q4V9Z8</accession>
<accession>Q61197</accession>